<proteinExistence type="inferred from homology"/>
<sequence length="201" mass="22697">MKINWQKVDNLLPVIIQNVATCEVLMLGYMNQEALEKTLAEKRVTFFSRTKNRLWTKGETSGHFLNVVDMSLDCDNDTLLILVNPIGETCHTGAESCFYQFEKTTQPDWIFLSKLERLIASRKGADPESSYTAQLYAKGTKRIAQKVGEEGVETALAATVKDKAETICEAADLVYHLTVLLQDADLSWSDVIHKLKERHTK</sequence>
<name>HIS2_PASMU</name>
<protein>
    <recommendedName>
        <fullName>Histidine biosynthesis bifunctional protein HisIE</fullName>
    </recommendedName>
    <domain>
        <recommendedName>
            <fullName>Phosphoribosyl-AMP cyclohydrolase</fullName>
            <shortName>PRA-CH</shortName>
            <ecNumber>3.5.4.19</ecNumber>
        </recommendedName>
    </domain>
    <domain>
        <recommendedName>
            <fullName>Phosphoribosyl-ATP pyrophosphatase</fullName>
            <shortName>PRA-PH</shortName>
            <ecNumber>3.6.1.31</ecNumber>
        </recommendedName>
    </domain>
</protein>
<feature type="chain" id="PRO_0000136420" description="Histidine biosynthesis bifunctional protein HisIE">
    <location>
        <begin position="1"/>
        <end position="201"/>
    </location>
</feature>
<feature type="region of interest" description="Phosphoribosyl-AMP cyclohydrolase">
    <location>
        <begin position="1"/>
        <end position="111"/>
    </location>
</feature>
<feature type="region of interest" description="Phosphoribosyl-ATP pyrophosphohydrolase">
    <location>
        <begin position="112"/>
        <end position="201"/>
    </location>
</feature>
<gene>
    <name type="primary">hisI</name>
    <name type="synonym">hisIE</name>
    <name type="ordered locus">PM1206</name>
</gene>
<reference key="1">
    <citation type="journal article" date="2001" name="Proc. Natl. Acad. Sci. U.S.A.">
        <title>Complete genomic sequence of Pasteurella multocida Pm70.</title>
        <authorList>
            <person name="May B.J."/>
            <person name="Zhang Q."/>
            <person name="Li L.L."/>
            <person name="Paustian M.L."/>
            <person name="Whittam T.S."/>
            <person name="Kapur V."/>
        </authorList>
    </citation>
    <scope>NUCLEOTIDE SEQUENCE [LARGE SCALE GENOMIC DNA]</scope>
    <source>
        <strain>Pm70</strain>
    </source>
</reference>
<evidence type="ECO:0000250" key="1"/>
<evidence type="ECO:0000305" key="2"/>
<comment type="catalytic activity">
    <reaction>
        <text>1-(5-phospho-beta-D-ribosyl)-ATP + H2O = 1-(5-phospho-beta-D-ribosyl)-5'-AMP + diphosphate + H(+)</text>
        <dbReference type="Rhea" id="RHEA:22828"/>
        <dbReference type="ChEBI" id="CHEBI:15377"/>
        <dbReference type="ChEBI" id="CHEBI:15378"/>
        <dbReference type="ChEBI" id="CHEBI:33019"/>
        <dbReference type="ChEBI" id="CHEBI:59457"/>
        <dbReference type="ChEBI" id="CHEBI:73183"/>
        <dbReference type="EC" id="3.6.1.31"/>
    </reaction>
</comment>
<comment type="catalytic activity">
    <reaction>
        <text>1-(5-phospho-beta-D-ribosyl)-5'-AMP + H2O = 1-(5-phospho-beta-D-ribosyl)-5-[(5-phospho-beta-D-ribosylamino)methylideneamino]imidazole-4-carboxamide</text>
        <dbReference type="Rhea" id="RHEA:20049"/>
        <dbReference type="ChEBI" id="CHEBI:15377"/>
        <dbReference type="ChEBI" id="CHEBI:58435"/>
        <dbReference type="ChEBI" id="CHEBI:59457"/>
        <dbReference type="EC" id="3.5.4.19"/>
    </reaction>
</comment>
<comment type="pathway">
    <text>Amino-acid biosynthesis; L-histidine biosynthesis; L-histidine from 5-phospho-alpha-D-ribose 1-diphosphate: step 2/9.</text>
</comment>
<comment type="pathway">
    <text>Amino-acid biosynthesis; L-histidine biosynthesis; L-histidine from 5-phospho-alpha-D-ribose 1-diphosphate: step 3/9.</text>
</comment>
<comment type="subcellular location">
    <subcellularLocation>
        <location evidence="1">Cytoplasm</location>
    </subcellularLocation>
</comment>
<comment type="similarity">
    <text evidence="2">In the N-terminal section; belongs to the PRA-CH family.</text>
</comment>
<comment type="similarity">
    <text evidence="2">In the C-terminal section; belongs to the PRA-PH family.</text>
</comment>
<accession>Q9CLL8</accession>
<keyword id="KW-0028">Amino-acid biosynthesis</keyword>
<keyword id="KW-0067">ATP-binding</keyword>
<keyword id="KW-0963">Cytoplasm</keyword>
<keyword id="KW-0368">Histidine biosynthesis</keyword>
<keyword id="KW-0378">Hydrolase</keyword>
<keyword id="KW-0511">Multifunctional enzyme</keyword>
<keyword id="KW-0547">Nucleotide-binding</keyword>
<keyword id="KW-1185">Reference proteome</keyword>
<organism>
    <name type="scientific">Pasteurella multocida (strain Pm70)</name>
    <dbReference type="NCBI Taxonomy" id="272843"/>
    <lineage>
        <taxon>Bacteria</taxon>
        <taxon>Pseudomonadati</taxon>
        <taxon>Pseudomonadota</taxon>
        <taxon>Gammaproteobacteria</taxon>
        <taxon>Pasteurellales</taxon>
        <taxon>Pasteurellaceae</taxon>
        <taxon>Pasteurella</taxon>
    </lineage>
</organism>
<dbReference type="EC" id="3.5.4.19"/>
<dbReference type="EC" id="3.6.1.31"/>
<dbReference type="EMBL" id="AE004439">
    <property type="protein sequence ID" value="AAK03290.1"/>
    <property type="molecule type" value="Genomic_DNA"/>
</dbReference>
<dbReference type="RefSeq" id="WP_010907073.1">
    <property type="nucleotide sequence ID" value="NC_002663.1"/>
</dbReference>
<dbReference type="SMR" id="Q9CLL8"/>
<dbReference type="STRING" id="272843.PM1206"/>
<dbReference type="EnsemblBacteria" id="AAK03290">
    <property type="protein sequence ID" value="AAK03290"/>
    <property type="gene ID" value="PM1206"/>
</dbReference>
<dbReference type="KEGG" id="pmu:PM1206"/>
<dbReference type="PATRIC" id="fig|272843.6.peg.1216"/>
<dbReference type="HOGENOM" id="CLU_048577_3_1_6"/>
<dbReference type="OrthoDB" id="9795769at2"/>
<dbReference type="UniPathway" id="UPA00031">
    <property type="reaction ID" value="UER00007"/>
</dbReference>
<dbReference type="UniPathway" id="UPA00031">
    <property type="reaction ID" value="UER00008"/>
</dbReference>
<dbReference type="Proteomes" id="UP000000809">
    <property type="component" value="Chromosome"/>
</dbReference>
<dbReference type="GO" id="GO:0005737">
    <property type="term" value="C:cytoplasm"/>
    <property type="evidence" value="ECO:0007669"/>
    <property type="project" value="UniProtKB-SubCell"/>
</dbReference>
<dbReference type="GO" id="GO:0005524">
    <property type="term" value="F:ATP binding"/>
    <property type="evidence" value="ECO:0007669"/>
    <property type="project" value="UniProtKB-KW"/>
</dbReference>
<dbReference type="GO" id="GO:0004635">
    <property type="term" value="F:phosphoribosyl-AMP cyclohydrolase activity"/>
    <property type="evidence" value="ECO:0007669"/>
    <property type="project" value="UniProtKB-UniRule"/>
</dbReference>
<dbReference type="GO" id="GO:0004636">
    <property type="term" value="F:phosphoribosyl-ATP diphosphatase activity"/>
    <property type="evidence" value="ECO:0007669"/>
    <property type="project" value="UniProtKB-UniRule"/>
</dbReference>
<dbReference type="GO" id="GO:0000105">
    <property type="term" value="P:L-histidine biosynthetic process"/>
    <property type="evidence" value="ECO:0007669"/>
    <property type="project" value="UniProtKB-UniRule"/>
</dbReference>
<dbReference type="CDD" id="cd11534">
    <property type="entry name" value="NTP-PPase_HisIE_like"/>
    <property type="match status" value="1"/>
</dbReference>
<dbReference type="FunFam" id="1.10.287.1080:FF:000002">
    <property type="entry name" value="Histidine biosynthesis bifunctional protein HisIE"/>
    <property type="match status" value="1"/>
</dbReference>
<dbReference type="FunFam" id="3.10.20.810:FF:000001">
    <property type="entry name" value="Histidine biosynthesis bifunctional protein HisIE"/>
    <property type="match status" value="1"/>
</dbReference>
<dbReference type="Gene3D" id="1.10.287.1080">
    <property type="entry name" value="MazG-like"/>
    <property type="match status" value="1"/>
</dbReference>
<dbReference type="Gene3D" id="3.10.20.810">
    <property type="entry name" value="Phosphoribosyl-AMP cyclohydrolase"/>
    <property type="match status" value="1"/>
</dbReference>
<dbReference type="HAMAP" id="MF_01020">
    <property type="entry name" value="HisE"/>
    <property type="match status" value="1"/>
</dbReference>
<dbReference type="HAMAP" id="MF_01019">
    <property type="entry name" value="HisIE"/>
    <property type="match status" value="1"/>
</dbReference>
<dbReference type="InterPro" id="IPR023019">
    <property type="entry name" value="His_synth_HisIE"/>
</dbReference>
<dbReference type="InterPro" id="IPR008179">
    <property type="entry name" value="HisE"/>
</dbReference>
<dbReference type="InterPro" id="IPR021130">
    <property type="entry name" value="PRib-ATP_PPHydrolase-like"/>
</dbReference>
<dbReference type="InterPro" id="IPR002496">
    <property type="entry name" value="PRib_AMP_CycHydrolase_dom"/>
</dbReference>
<dbReference type="InterPro" id="IPR038019">
    <property type="entry name" value="PRib_AMP_CycHydrolase_sf"/>
</dbReference>
<dbReference type="NCBIfam" id="TIGR03188">
    <property type="entry name" value="histidine_hisI"/>
    <property type="match status" value="1"/>
</dbReference>
<dbReference type="NCBIfam" id="NF000768">
    <property type="entry name" value="PRK00051.1"/>
    <property type="match status" value="1"/>
</dbReference>
<dbReference type="NCBIfam" id="NF002747">
    <property type="entry name" value="PRK02759.1"/>
    <property type="match status" value="1"/>
</dbReference>
<dbReference type="PANTHER" id="PTHR42945">
    <property type="entry name" value="HISTIDINE BIOSYNTHESIS BIFUNCTIONAL PROTEIN"/>
    <property type="match status" value="1"/>
</dbReference>
<dbReference type="PANTHER" id="PTHR42945:SF9">
    <property type="entry name" value="HISTIDINE BIOSYNTHESIS BIFUNCTIONAL PROTEIN HISIE"/>
    <property type="match status" value="1"/>
</dbReference>
<dbReference type="Pfam" id="PF01502">
    <property type="entry name" value="PRA-CH"/>
    <property type="match status" value="1"/>
</dbReference>
<dbReference type="Pfam" id="PF01503">
    <property type="entry name" value="PRA-PH"/>
    <property type="match status" value="1"/>
</dbReference>
<dbReference type="SUPFAM" id="SSF101386">
    <property type="entry name" value="all-alpha NTP pyrophosphatases"/>
    <property type="match status" value="1"/>
</dbReference>
<dbReference type="SUPFAM" id="SSF141734">
    <property type="entry name" value="HisI-like"/>
    <property type="match status" value="1"/>
</dbReference>